<comment type="function">
    <text evidence="1">Forms a fork protection complex (FPC) with CSM3 and which is required for chromosome segregation during meiosis and DNA damage repair. FPC coordinates leading and lagging strand synthesis and moves with the replication fork. FPC stabilizes replication forks in a configuration that is recognized by replication checkpoint sensors (By similarity).</text>
</comment>
<comment type="subunit">
    <text evidence="1">Component of the fork protection complex (FPC) consisting of TOF1 and CSM3.</text>
</comment>
<comment type="subcellular location">
    <subcellularLocation>
        <location evidence="1">Nucleus</location>
    </subcellularLocation>
</comment>
<comment type="similarity">
    <text evidence="3">Belongs to the timeless family.</text>
</comment>
<evidence type="ECO:0000250" key="1"/>
<evidence type="ECO:0000256" key="2">
    <source>
        <dbReference type="SAM" id="MobiDB-lite"/>
    </source>
</evidence>
<evidence type="ECO:0000305" key="3"/>
<organism>
    <name type="scientific">Phaeosphaeria nodorum (strain SN15 / ATCC MYA-4574 / FGSC 10173)</name>
    <name type="common">Glume blotch fungus</name>
    <name type="synonym">Parastagonospora nodorum</name>
    <dbReference type="NCBI Taxonomy" id="321614"/>
    <lineage>
        <taxon>Eukaryota</taxon>
        <taxon>Fungi</taxon>
        <taxon>Dikarya</taxon>
        <taxon>Ascomycota</taxon>
        <taxon>Pezizomycotina</taxon>
        <taxon>Dothideomycetes</taxon>
        <taxon>Pleosporomycetidae</taxon>
        <taxon>Pleosporales</taxon>
        <taxon>Pleosporineae</taxon>
        <taxon>Phaeosphaeriaceae</taxon>
        <taxon>Parastagonospora</taxon>
    </lineage>
</organism>
<feature type="chain" id="PRO_0000301745" description="Topoisomerase 1-associated factor 1">
    <location>
        <begin position="1"/>
        <end position="1177"/>
    </location>
</feature>
<feature type="region of interest" description="Disordered" evidence="2">
    <location>
        <begin position="332"/>
        <end position="353"/>
    </location>
</feature>
<feature type="region of interest" description="Disordered" evidence="2">
    <location>
        <begin position="576"/>
        <end position="598"/>
    </location>
</feature>
<feature type="region of interest" description="Disordered" evidence="2">
    <location>
        <begin position="802"/>
        <end position="830"/>
    </location>
</feature>
<feature type="region of interest" description="Disordered" evidence="2">
    <location>
        <begin position="893"/>
        <end position="1012"/>
    </location>
</feature>
<feature type="region of interest" description="Disordered" evidence="2">
    <location>
        <begin position="1028"/>
        <end position="1177"/>
    </location>
</feature>
<feature type="compositionally biased region" description="Acidic residues" evidence="2">
    <location>
        <begin position="586"/>
        <end position="597"/>
    </location>
</feature>
<feature type="compositionally biased region" description="Basic and acidic residues" evidence="2">
    <location>
        <begin position="893"/>
        <end position="908"/>
    </location>
</feature>
<feature type="compositionally biased region" description="Acidic residues" evidence="2">
    <location>
        <begin position="923"/>
        <end position="934"/>
    </location>
</feature>
<feature type="compositionally biased region" description="Basic and acidic residues" evidence="2">
    <location>
        <begin position="935"/>
        <end position="955"/>
    </location>
</feature>
<feature type="compositionally biased region" description="Basic and acidic residues" evidence="2">
    <location>
        <begin position="975"/>
        <end position="1001"/>
    </location>
</feature>
<feature type="compositionally biased region" description="Acidic residues" evidence="2">
    <location>
        <begin position="1002"/>
        <end position="1011"/>
    </location>
</feature>
<feature type="compositionally biased region" description="Basic residues" evidence="2">
    <location>
        <begin position="1054"/>
        <end position="1066"/>
    </location>
</feature>
<feature type="compositionally biased region" description="Acidic residues" evidence="2">
    <location>
        <begin position="1071"/>
        <end position="1080"/>
    </location>
</feature>
<feature type="compositionally biased region" description="Polar residues" evidence="2">
    <location>
        <begin position="1129"/>
        <end position="1140"/>
    </location>
</feature>
<feature type="compositionally biased region" description="Acidic residues" evidence="2">
    <location>
        <begin position="1145"/>
        <end position="1155"/>
    </location>
</feature>
<protein>
    <recommendedName>
        <fullName>Topoisomerase 1-associated factor 1</fullName>
    </recommendedName>
</protein>
<keyword id="KW-0131">Cell cycle</keyword>
<keyword id="KW-0227">DNA damage</keyword>
<keyword id="KW-0234">DNA repair</keyword>
<keyword id="KW-0236">DNA replication inhibitor</keyword>
<keyword id="KW-0469">Meiosis</keyword>
<keyword id="KW-0539">Nucleus</keyword>
<accession>Q0UJF3</accession>
<sequence>MAQTTLDDWAKDPVDPEIRAHVHSLITALGGIGDDGTYSLGDDALLCLKDLRKWLKFGDGQLNRRDVARCMAEANLVKGDLLEILAKISPKAIEDKWRHKIAVAALELLVPLTWPFEIDPIEATVNHHRHGPYIQLAQIGYKRAILQFDRDRTLQTAVKIALPSMAVPLRERTPRDEGIIRIALYFIRNIAMLSPPTSAPMDIDEAEVSRSATIDTFHEQDIFQVLLSVASSIGEDFVAQDVIVLEILFFLLKGIDAEKLFMEDKKLGTKNADELKNLMQKEKAMLAGYARNAPTRHNRFGTMIWVKRDDEKVTTISGQDVLGKAQASMQKMDQTKKWNKPRRPGKKVDGEQEREEFDLPVALTVSARKHIKAFVEEFLDSSFNPLFLHLRKAIERETERVEIRHSRQFFYLASWFLRAECARRRTMKERAADPKDPAVLTAEDESYGLVAEVMNQETFILLNRFMQKSQDEKAWQDLNAGMKCFTQILLTVHEMSESALEDDQEIAENIQNRIFYEESTHDRVVMILRSYNGQGFGYLDAVTELSHVFLRMLERYAKQNVDLQVKSKRRARKIKKKVAETHGANGDEEGQVSDTEDIQQAQRTVSERKFDFQRFAAKFVNQSSVDTFVAFARYFSDLDTEQLKRIHRFFHRVAFKMELGVLLCRVDILQLFTKMMKGPGGLDPESPAYKEWDEFVRHFFRQVVKKVQERPELVVEMLFSKIPATLFFLDHGYDREITKSTPRAPAELEVKPGMEVPEQIGVAVGVLINQAKSDALHWVRDILISAAEERKAWEGAEEARKALAAAERPAGEEVAENTEEESPKPPSILVKPDSEERRLAMFKDNKLRLLMTLVGFSRLGEAHDPDATWIIPSAFTSTDLEFAIDLLRKYEFDPPTYEDGKGPEDLIRNKASAARRSTRRVDFDDDDEEAENAVEEDHGEYRAGKATERKPDGERKKLKRRQRVGTPVELDDEEKDRRAEARRKKELEKFAKQKSTEFVHDSDEEDDDDKDMEFFRREEALRTEIMKAFGKSLTAGSTETATSKKRKAEDSTSRTKRRKTPPKRKAQPFADSDDSDEDVQDAATPSSRAPSLSARDMIHDESEVEDEATDTPLSSQHANGVHESDEDTTTGATASITVKSQDVVMADDDDEEDEATPVARRPMARKRGAFIVDSDSE</sequence>
<gene>
    <name type="primary">TOF1</name>
    <name type="ORF">SNOG_08111</name>
</gene>
<dbReference type="EMBL" id="CH445336">
    <property type="protein sequence ID" value="EAT84387.1"/>
    <property type="molecule type" value="Genomic_DNA"/>
</dbReference>
<dbReference type="RefSeq" id="XP_001798436.1">
    <property type="nucleotide sequence ID" value="XM_001798384.1"/>
</dbReference>
<dbReference type="SMR" id="Q0UJF3"/>
<dbReference type="FunCoup" id="Q0UJF3">
    <property type="interactions" value="48"/>
</dbReference>
<dbReference type="STRING" id="321614.Q0UJF3"/>
<dbReference type="EnsemblFungi" id="SNOT_08111">
    <property type="protein sequence ID" value="SNOT_08111"/>
    <property type="gene ID" value="SNOG_08111"/>
</dbReference>
<dbReference type="GeneID" id="5975334"/>
<dbReference type="KEGG" id="pno:SNOG_08111"/>
<dbReference type="VEuPathDB" id="FungiDB:JI435_081110"/>
<dbReference type="eggNOG" id="KOG1974">
    <property type="taxonomic scope" value="Eukaryota"/>
</dbReference>
<dbReference type="HOGENOM" id="CLU_004390_0_0_1"/>
<dbReference type="InParanoid" id="Q0UJF3"/>
<dbReference type="OMA" id="VNHHRHT"/>
<dbReference type="OrthoDB" id="310853at2759"/>
<dbReference type="Proteomes" id="UP000001055">
    <property type="component" value="Unassembled WGS sequence"/>
</dbReference>
<dbReference type="GO" id="GO:0031298">
    <property type="term" value="C:replication fork protection complex"/>
    <property type="evidence" value="ECO:0000318"/>
    <property type="project" value="GO_Central"/>
</dbReference>
<dbReference type="GO" id="GO:0003677">
    <property type="term" value="F:DNA binding"/>
    <property type="evidence" value="ECO:0000318"/>
    <property type="project" value="GO_Central"/>
</dbReference>
<dbReference type="GO" id="GO:0006281">
    <property type="term" value="P:DNA repair"/>
    <property type="evidence" value="ECO:0000318"/>
    <property type="project" value="GO_Central"/>
</dbReference>
<dbReference type="GO" id="GO:0000076">
    <property type="term" value="P:DNA replication checkpoint signaling"/>
    <property type="evidence" value="ECO:0000318"/>
    <property type="project" value="GO_Central"/>
</dbReference>
<dbReference type="GO" id="GO:0051321">
    <property type="term" value="P:meiotic cell cycle"/>
    <property type="evidence" value="ECO:0007669"/>
    <property type="project" value="UniProtKB-KW"/>
</dbReference>
<dbReference type="GO" id="GO:0043111">
    <property type="term" value="P:replication fork arrest"/>
    <property type="evidence" value="ECO:0000318"/>
    <property type="project" value="GO_Central"/>
</dbReference>
<dbReference type="InterPro" id="IPR044998">
    <property type="entry name" value="Timeless"/>
</dbReference>
<dbReference type="InterPro" id="IPR006906">
    <property type="entry name" value="Timeless_N"/>
</dbReference>
<dbReference type="PANTHER" id="PTHR22940:SF4">
    <property type="entry name" value="PROTEIN TIMELESS HOMOLOG"/>
    <property type="match status" value="1"/>
</dbReference>
<dbReference type="PANTHER" id="PTHR22940">
    <property type="entry name" value="TIMEOUT/TIMELESS-2"/>
    <property type="match status" value="1"/>
</dbReference>
<dbReference type="Pfam" id="PF04821">
    <property type="entry name" value="TIMELESS"/>
    <property type="match status" value="1"/>
</dbReference>
<proteinExistence type="inferred from homology"/>
<reference key="1">
    <citation type="journal article" date="2007" name="Plant Cell">
        <title>Dothideomycete-plant interactions illuminated by genome sequencing and EST analysis of the wheat pathogen Stagonospora nodorum.</title>
        <authorList>
            <person name="Hane J.K."/>
            <person name="Lowe R.G.T."/>
            <person name="Solomon P.S."/>
            <person name="Tan K.-C."/>
            <person name="Schoch C.L."/>
            <person name="Spatafora J.W."/>
            <person name="Crous P.W."/>
            <person name="Kodira C.D."/>
            <person name="Birren B.W."/>
            <person name="Galagan J.E."/>
            <person name="Torriani S.F.F."/>
            <person name="McDonald B.A."/>
            <person name="Oliver R.P."/>
        </authorList>
    </citation>
    <scope>NUCLEOTIDE SEQUENCE [LARGE SCALE GENOMIC DNA]</scope>
    <source>
        <strain>SN15 / ATCC MYA-4574 / FGSC 10173</strain>
    </source>
</reference>
<name>TOF1_PHANO</name>